<dbReference type="EC" id="2.3.1.31" evidence="1 2 3"/>
<dbReference type="EMBL" id="AF052652">
    <property type="protein sequence ID" value="AAC06035.1"/>
    <property type="molecule type" value="Genomic_DNA"/>
</dbReference>
<dbReference type="EMBL" id="BA000036">
    <property type="protein sequence ID" value="BAB98045.1"/>
    <property type="molecule type" value="Genomic_DNA"/>
</dbReference>
<dbReference type="EMBL" id="BX927149">
    <property type="protein sequence ID" value="CAF19358.1"/>
    <property type="molecule type" value="Genomic_DNA"/>
</dbReference>
<dbReference type="RefSeq" id="NP_599885.1">
    <property type="nucleotide sequence ID" value="NC_003450.3"/>
</dbReference>
<dbReference type="SMR" id="O68640"/>
<dbReference type="STRING" id="196627.cg0754"/>
<dbReference type="ESTHER" id="corgl-metx">
    <property type="family name" value="Homoserine_transacetylase"/>
</dbReference>
<dbReference type="KEGG" id="cgb:cg0754"/>
<dbReference type="KEGG" id="cgl:Cgl0652"/>
<dbReference type="PATRIC" id="fig|196627.13.peg.638"/>
<dbReference type="eggNOG" id="COG2021">
    <property type="taxonomic scope" value="Bacteria"/>
</dbReference>
<dbReference type="HOGENOM" id="CLU_028760_1_0_11"/>
<dbReference type="OrthoDB" id="9800754at2"/>
<dbReference type="BioCyc" id="CORYNE:G18NG-10214-MONOMER"/>
<dbReference type="BioCyc" id="MetaCyc:MONOMER-9447"/>
<dbReference type="UniPathway" id="UPA00051">
    <property type="reaction ID" value="UER00074"/>
</dbReference>
<dbReference type="Proteomes" id="UP000000582">
    <property type="component" value="Chromosome"/>
</dbReference>
<dbReference type="Proteomes" id="UP000001009">
    <property type="component" value="Chromosome"/>
</dbReference>
<dbReference type="GO" id="GO:0005737">
    <property type="term" value="C:cytoplasm"/>
    <property type="evidence" value="ECO:0007669"/>
    <property type="project" value="UniProtKB-SubCell"/>
</dbReference>
<dbReference type="GO" id="GO:0004414">
    <property type="term" value="F:homoserine O-acetyltransferase activity"/>
    <property type="evidence" value="ECO:0007669"/>
    <property type="project" value="UniProtKB-UniRule"/>
</dbReference>
<dbReference type="GO" id="GO:0009092">
    <property type="term" value="P:homoserine metabolic process"/>
    <property type="evidence" value="ECO:0007669"/>
    <property type="project" value="TreeGrafter"/>
</dbReference>
<dbReference type="GO" id="GO:0009086">
    <property type="term" value="P:methionine biosynthetic process"/>
    <property type="evidence" value="ECO:0007669"/>
    <property type="project" value="UniProtKB-UniRule"/>
</dbReference>
<dbReference type="Gene3D" id="3.40.50.1820">
    <property type="entry name" value="alpha/beta hydrolase"/>
    <property type="match status" value="1"/>
</dbReference>
<dbReference type="HAMAP" id="MF_00296">
    <property type="entry name" value="MetX_acyltransf"/>
    <property type="match status" value="1"/>
</dbReference>
<dbReference type="InterPro" id="IPR000073">
    <property type="entry name" value="AB_hydrolase_1"/>
</dbReference>
<dbReference type="InterPro" id="IPR029058">
    <property type="entry name" value="AB_hydrolase_fold"/>
</dbReference>
<dbReference type="InterPro" id="IPR008220">
    <property type="entry name" value="HAT_MetX-like"/>
</dbReference>
<dbReference type="NCBIfam" id="TIGR01392">
    <property type="entry name" value="homoserO_Ac_trn"/>
    <property type="match status" value="1"/>
</dbReference>
<dbReference type="NCBIfam" id="NF001209">
    <property type="entry name" value="PRK00175.1"/>
    <property type="match status" value="1"/>
</dbReference>
<dbReference type="PANTHER" id="PTHR32268">
    <property type="entry name" value="HOMOSERINE O-ACETYLTRANSFERASE"/>
    <property type="match status" value="1"/>
</dbReference>
<dbReference type="PANTHER" id="PTHR32268:SF11">
    <property type="entry name" value="HOMOSERINE O-ACETYLTRANSFERASE"/>
    <property type="match status" value="1"/>
</dbReference>
<dbReference type="Pfam" id="PF00561">
    <property type="entry name" value="Abhydrolase_1"/>
    <property type="match status" value="1"/>
</dbReference>
<dbReference type="PIRSF" id="PIRSF000443">
    <property type="entry name" value="Homoser_Ac_trans"/>
    <property type="match status" value="1"/>
</dbReference>
<dbReference type="SUPFAM" id="SSF53474">
    <property type="entry name" value="alpha/beta-Hydrolases"/>
    <property type="match status" value="1"/>
</dbReference>
<name>METXA_CORGL</name>
<evidence type="ECO:0000255" key="1">
    <source>
        <dbReference type="HAMAP-Rule" id="MF_00296"/>
    </source>
</evidence>
<evidence type="ECO:0000269" key="2">
    <source>
    </source>
</evidence>
<evidence type="ECO:0000269" key="3">
    <source>
    </source>
</evidence>
<evidence type="ECO:0000303" key="4">
    <source>
    </source>
</evidence>
<evidence type="ECO:0000303" key="5">
    <source>
    </source>
</evidence>
<evidence type="ECO:0000305" key="6"/>
<organism>
    <name type="scientific">Corynebacterium glutamicum (strain ATCC 13032 / DSM 20300 / JCM 1318 / BCRC 11384 / CCUG 27702 / LMG 3730 / NBRC 12168 / NCIMB 10025 / NRRL B-2784 / 534)</name>
    <dbReference type="NCBI Taxonomy" id="196627"/>
    <lineage>
        <taxon>Bacteria</taxon>
        <taxon>Bacillati</taxon>
        <taxon>Actinomycetota</taxon>
        <taxon>Actinomycetes</taxon>
        <taxon>Mycobacteriales</taxon>
        <taxon>Corynebacteriaceae</taxon>
        <taxon>Corynebacterium</taxon>
    </lineage>
</organism>
<keyword id="KW-0012">Acyltransferase</keyword>
<keyword id="KW-0028">Amino-acid biosynthesis</keyword>
<keyword id="KW-0963">Cytoplasm</keyword>
<keyword id="KW-0486">Methionine biosynthesis</keyword>
<keyword id="KW-1185">Reference proteome</keyword>
<keyword id="KW-0808">Transferase</keyword>
<reference key="1">
    <citation type="journal article" date="1998" name="Mol. Cells">
        <title>Isolation and analysis of metA, a methionine biosynthetic gene encoding homoserine acetyltransferase in Corynebacterium glutamicum.</title>
        <authorList>
            <person name="Park S.-D."/>
            <person name="Lee J.-Y."/>
            <person name="Kim Y."/>
            <person name="Kim J.-H."/>
            <person name="Lee H.-S."/>
        </authorList>
    </citation>
    <scope>NUCLEOTIDE SEQUENCE [GENOMIC DNA]</scope>
    <scope>FUNCTION</scope>
    <scope>CATALYTIC ACTIVITY</scope>
    <scope>PATHWAY</scope>
    <scope>DISRUPTION PHENOTYPE</scope>
</reference>
<reference key="2">
    <citation type="journal article" date="2003" name="Appl. Microbiol. Biotechnol.">
        <title>The Corynebacterium glutamicum genome: features and impacts on biotechnological processes.</title>
        <authorList>
            <person name="Ikeda M."/>
            <person name="Nakagawa S."/>
        </authorList>
    </citation>
    <scope>NUCLEOTIDE SEQUENCE [LARGE SCALE GENOMIC DNA]</scope>
    <source>
        <strain>ATCC 13032 / DSM 20300 / JCM 1318 / BCRC 11384 / CCUG 27702 / LMG 3730 / NBRC 12168 / NCIMB 10025 / NRRL B-2784 / 534</strain>
    </source>
</reference>
<reference key="3">
    <citation type="journal article" date="2003" name="J. Biotechnol.">
        <title>The complete Corynebacterium glutamicum ATCC 13032 genome sequence and its impact on the production of L-aspartate-derived amino acids and vitamins.</title>
        <authorList>
            <person name="Kalinowski J."/>
            <person name="Bathe B."/>
            <person name="Bartels D."/>
            <person name="Bischoff N."/>
            <person name="Bott M."/>
            <person name="Burkovski A."/>
            <person name="Dusch N."/>
            <person name="Eggeling L."/>
            <person name="Eikmanns B.J."/>
            <person name="Gaigalat L."/>
            <person name="Goesmann A."/>
            <person name="Hartmann M."/>
            <person name="Huthmacher K."/>
            <person name="Kraemer R."/>
            <person name="Linke B."/>
            <person name="McHardy A.C."/>
            <person name="Meyer F."/>
            <person name="Moeckel B."/>
            <person name="Pfefferle W."/>
            <person name="Puehler A."/>
            <person name="Rey D.A."/>
            <person name="Rueckert C."/>
            <person name="Rupp O."/>
            <person name="Sahm H."/>
            <person name="Wendisch V.F."/>
            <person name="Wiegraebe I."/>
            <person name="Tauch A."/>
        </authorList>
    </citation>
    <scope>NUCLEOTIDE SEQUENCE [LARGE SCALE GENOMIC DNA]</scope>
    <source>
        <strain>ATCC 13032 / DSM 20300 / JCM 1318 / BCRC 11384 / CCUG 27702 / LMG 3730 / NBRC 12168 / NCIMB 10025 / NRRL B-2784 / 534</strain>
    </source>
</reference>
<reference key="4">
    <citation type="journal article" date="2017" name="Nat. Chem. Biol.">
        <title>Parallel evolution of non-homologous isofunctional enzymes in methionine biosynthesis.</title>
        <authorList>
            <person name="Bastard K."/>
            <person name="Perret A."/>
            <person name="Mariage A."/>
            <person name="Bessonnet T."/>
            <person name="Pinet-Turpault A."/>
            <person name="Petit J.L."/>
            <person name="Darii E."/>
            <person name="Bazire P."/>
            <person name="Vergne-Vaxelaire C."/>
            <person name="Brewee C."/>
            <person name="Debard A."/>
            <person name="Pellouin V."/>
            <person name="Besnard-Gonnet M."/>
            <person name="Artiguenave F."/>
            <person name="Medigue C."/>
            <person name="Vallenet D."/>
            <person name="Danchin A."/>
            <person name="Zaparucha A."/>
            <person name="Weissenbach J."/>
            <person name="Salanoubat M."/>
            <person name="de Berardinis V."/>
        </authorList>
    </citation>
    <scope>FUNCTION</scope>
    <scope>CATALYTIC ACTIVITY</scope>
</reference>
<proteinExistence type="evidence at protein level"/>
<feature type="chain" id="PRO_0000155715" description="Homoserine O-acetyltransferase">
    <location>
        <begin position="1"/>
        <end position="377"/>
    </location>
</feature>
<feature type="domain" description="AB hydrolase-1" evidence="1">
    <location>
        <begin position="48"/>
        <end position="347"/>
    </location>
</feature>
<feature type="active site" description="Nucleophile" evidence="1">
    <location>
        <position position="143"/>
    </location>
</feature>
<feature type="active site" evidence="1">
    <location>
        <position position="311"/>
    </location>
</feature>
<feature type="active site" evidence="1">
    <location>
        <position position="341"/>
    </location>
</feature>
<feature type="binding site" evidence="1">
    <location>
        <position position="213"/>
    </location>
    <ligand>
        <name>substrate</name>
    </ligand>
</feature>
<feature type="binding site" evidence="1">
    <location>
        <position position="342"/>
    </location>
    <ligand>
        <name>substrate</name>
    </ligand>
</feature>
<feature type="sequence conflict" description="In Ref. 1; AAC06035." evidence="6" ref="1">
    <original>V</original>
    <variation>VVL</variation>
    <location>
        <position position="139"/>
    </location>
</feature>
<accession>O68640</accession>
<comment type="function">
    <text evidence="1 2 3">Transfers an acetyl group from acetyl-CoA to L-homoserine, forming acetyl-L-homoserine.</text>
</comment>
<comment type="catalytic activity">
    <reaction evidence="1 2 3">
        <text>L-homoserine + acetyl-CoA = O-acetyl-L-homoserine + CoA</text>
        <dbReference type="Rhea" id="RHEA:13701"/>
        <dbReference type="ChEBI" id="CHEBI:57287"/>
        <dbReference type="ChEBI" id="CHEBI:57288"/>
        <dbReference type="ChEBI" id="CHEBI:57476"/>
        <dbReference type="ChEBI" id="CHEBI:57716"/>
        <dbReference type="EC" id="2.3.1.31"/>
    </reaction>
</comment>
<comment type="pathway">
    <text evidence="1 3">Amino-acid biosynthesis; L-methionine biosynthesis via de novo pathway; O-acetyl-L-homoserine from L-homoserine: step 1/1.</text>
</comment>
<comment type="subunit">
    <text evidence="1">Homodimer.</text>
</comment>
<comment type="subcellular location">
    <subcellularLocation>
        <location evidence="1">Cytoplasm</location>
    </subcellularLocation>
</comment>
<comment type="disruption phenotype">
    <text evidence="3">Mutant cannot grow on minimal media with no added methionine.</text>
</comment>
<comment type="similarity">
    <text evidence="1">Belongs to the AB hydrolase superfamily. MetX family.</text>
</comment>
<gene>
    <name evidence="1 4" type="primary">metXA</name>
    <name evidence="5" type="synonym">metA</name>
    <name type="ordered locus">Cgl0652</name>
    <name type="ordered locus">cg0754</name>
</gene>
<protein>
    <recommendedName>
        <fullName evidence="1 5">Homoserine O-acetyltransferase</fullName>
        <shortName evidence="1 4 5">HAT</shortName>
        <ecNumber evidence="1 2 3">2.3.1.31</ecNumber>
    </recommendedName>
    <alternativeName>
        <fullName evidence="1">Homoserine transacetylase</fullName>
        <shortName evidence="1">HTA</shortName>
    </alternativeName>
</protein>
<sequence>MPTLAPSGQLEIQAIGDVSTEAGAIITNAEIAYHRWGEYRVDKEGRSNVVLIEHALTGDSNAADWWADLLGPGKAINTDIYCVICTNVIGGCNGSTGPGSMHPDGNFWGNRFPATSIRDQVNAEKQFLDALGITTVAAVLGGSMGGARTLEWAAMYPETVGAAAVLAVSARASAWQIGIQSAQIKAIENDHHWHEGNYYESGCNPATGLGAARRIAHLTYRGELEIDERFGTKAQKNENPLGPYRKPDQRFAVESYLDYQADKLVQRFDAGSYVLLTDALNRHDIGRDRGGLNKALESIKVPVLVAGVDTDILYPYHQQEHLSRNLGNLLAMAKIVSPVGHDAFLTESRQMDRIVRNFFSLISPDEDNPSTYIEFYI</sequence>